<protein>
    <recommendedName>
        <fullName>Putative serine carboxypeptidase-like 30</fullName>
        <ecNumber>3.4.16.-</ecNumber>
    </recommendedName>
</protein>
<gene>
    <name type="primary">SCPL30</name>
    <name type="ordered locus">At4g15100</name>
    <name type="ORF">dl3595w</name>
    <name type="ORF">FCAALL.186</name>
</gene>
<feature type="signal peptide" evidence="2">
    <location>
        <begin position="1"/>
        <end position="28"/>
    </location>
</feature>
<feature type="chain" id="PRO_0000274645" description="Putative serine carboxypeptidase-like 30">
    <location>
        <begin position="29"/>
        <end position="488"/>
    </location>
</feature>
<feature type="active site" evidence="3">
    <location>
        <position position="192"/>
    </location>
</feature>
<feature type="active site" evidence="3">
    <location>
        <position position="405"/>
    </location>
</feature>
<feature type="active site" evidence="3">
    <location>
        <position position="457"/>
    </location>
</feature>
<feature type="glycosylation site" description="N-linked (GlcNAc...) asparagine" evidence="2">
    <location>
        <position position="150"/>
    </location>
</feature>
<feature type="glycosylation site" description="N-linked (GlcNAc...) asparagine" evidence="2">
    <location>
        <position position="263"/>
    </location>
</feature>
<feature type="glycosylation site" description="N-linked (GlcNAc...) asparagine" evidence="2">
    <location>
        <position position="364"/>
    </location>
</feature>
<feature type="glycosylation site" description="N-linked (GlcNAc...) asparagine" evidence="2">
    <location>
        <position position="375"/>
    </location>
</feature>
<feature type="disulfide bond" evidence="1">
    <location>
        <begin position="99"/>
        <end position="368"/>
    </location>
</feature>
<feature type="disulfide bond" evidence="1">
    <location>
        <begin position="262"/>
        <end position="275"/>
    </location>
</feature>
<feature type="disulfide bond" evidence="1">
    <location>
        <begin position="299"/>
        <end position="336"/>
    </location>
</feature>
<evidence type="ECO:0000250" key="1"/>
<evidence type="ECO:0000255" key="2"/>
<evidence type="ECO:0000255" key="3">
    <source>
        <dbReference type="PROSITE-ProRule" id="PRU10074"/>
    </source>
</evidence>
<evidence type="ECO:0000305" key="4"/>
<comment type="function">
    <text evidence="1">Probable carboxypeptidase.</text>
</comment>
<comment type="subcellular location">
    <subcellularLocation>
        <location evidence="4">Secreted</location>
    </subcellularLocation>
</comment>
<comment type="tissue specificity">
    <text>Expression not detected.</text>
</comment>
<comment type="similarity">
    <text evidence="4">Belongs to the peptidase S10 family.</text>
</comment>
<comment type="sequence caution" evidence="4">
    <conflict type="erroneous gene model prediction">
        <sequence resource="EMBL-CDS" id="CAB10289"/>
    </conflict>
</comment>
<comment type="sequence caution" evidence="4">
    <conflict type="erroneous gene model prediction">
        <sequence resource="EMBL-CDS" id="CAB78552"/>
    </conflict>
</comment>
<keyword id="KW-0121">Carboxypeptidase</keyword>
<keyword id="KW-1015">Disulfide bond</keyword>
<keyword id="KW-0325">Glycoprotein</keyword>
<keyword id="KW-0378">Hydrolase</keyword>
<keyword id="KW-0645">Protease</keyword>
<keyword id="KW-1185">Reference proteome</keyword>
<keyword id="KW-0964">Secreted</keyword>
<keyword id="KW-0732">Signal</keyword>
<reference key="1">
    <citation type="journal article" date="1998" name="Nature">
        <title>Analysis of 1.9 Mb of contiguous sequence from chromosome 4 of Arabidopsis thaliana.</title>
        <authorList>
            <person name="Bevan M."/>
            <person name="Bancroft I."/>
            <person name="Bent E."/>
            <person name="Love K."/>
            <person name="Goodman H.M."/>
            <person name="Dean C."/>
            <person name="Bergkamp R."/>
            <person name="Dirkse W."/>
            <person name="van Staveren M."/>
            <person name="Stiekema W."/>
            <person name="Drost L."/>
            <person name="Ridley P."/>
            <person name="Hudson S.-A."/>
            <person name="Patel K."/>
            <person name="Murphy G."/>
            <person name="Piffanelli P."/>
            <person name="Wedler H."/>
            <person name="Wedler E."/>
            <person name="Wambutt R."/>
            <person name="Weitzenegger T."/>
            <person name="Pohl T."/>
            <person name="Terryn N."/>
            <person name="Gielen J."/>
            <person name="Villarroel R."/>
            <person name="De Clercq R."/>
            <person name="van Montagu M."/>
            <person name="Lecharny A."/>
            <person name="Aubourg S."/>
            <person name="Gy I."/>
            <person name="Kreis M."/>
            <person name="Lao N."/>
            <person name="Kavanagh T."/>
            <person name="Hempel S."/>
            <person name="Kotter P."/>
            <person name="Entian K.-D."/>
            <person name="Rieger M."/>
            <person name="Schaefer M."/>
            <person name="Funk B."/>
            <person name="Mueller-Auer S."/>
            <person name="Silvey M."/>
            <person name="James R."/>
            <person name="Monfort A."/>
            <person name="Pons A."/>
            <person name="Puigdomenech P."/>
            <person name="Douka A."/>
            <person name="Voukelatou E."/>
            <person name="Milioni D."/>
            <person name="Hatzopoulos P."/>
            <person name="Piravandi E."/>
            <person name="Obermaier B."/>
            <person name="Hilbert H."/>
            <person name="Duesterhoeft A."/>
            <person name="Moores T."/>
            <person name="Jones J.D.G."/>
            <person name="Eneva T."/>
            <person name="Palme K."/>
            <person name="Benes V."/>
            <person name="Rechmann S."/>
            <person name="Ansorge W."/>
            <person name="Cooke R."/>
            <person name="Berger C."/>
            <person name="Delseny M."/>
            <person name="Voet M."/>
            <person name="Volckaert G."/>
            <person name="Mewes H.-W."/>
            <person name="Klosterman S."/>
            <person name="Schueller C."/>
            <person name="Chalwatzis N."/>
        </authorList>
    </citation>
    <scope>NUCLEOTIDE SEQUENCE [LARGE SCALE GENOMIC DNA]</scope>
    <source>
        <strain>cv. Columbia</strain>
    </source>
</reference>
<reference key="2">
    <citation type="journal article" date="1999" name="Nature">
        <title>Sequence and analysis of chromosome 4 of the plant Arabidopsis thaliana.</title>
        <authorList>
            <person name="Mayer K.F.X."/>
            <person name="Schueller C."/>
            <person name="Wambutt R."/>
            <person name="Murphy G."/>
            <person name="Volckaert G."/>
            <person name="Pohl T."/>
            <person name="Duesterhoeft A."/>
            <person name="Stiekema W."/>
            <person name="Entian K.-D."/>
            <person name="Terryn N."/>
            <person name="Harris B."/>
            <person name="Ansorge W."/>
            <person name="Brandt P."/>
            <person name="Grivell L.A."/>
            <person name="Rieger M."/>
            <person name="Weichselgartner M."/>
            <person name="de Simone V."/>
            <person name="Obermaier B."/>
            <person name="Mache R."/>
            <person name="Mueller M."/>
            <person name="Kreis M."/>
            <person name="Delseny M."/>
            <person name="Puigdomenech P."/>
            <person name="Watson M."/>
            <person name="Schmidtheini T."/>
            <person name="Reichert B."/>
            <person name="Portetelle D."/>
            <person name="Perez-Alonso M."/>
            <person name="Boutry M."/>
            <person name="Bancroft I."/>
            <person name="Vos P."/>
            <person name="Hoheisel J."/>
            <person name="Zimmermann W."/>
            <person name="Wedler H."/>
            <person name="Ridley P."/>
            <person name="Langham S.-A."/>
            <person name="McCullagh B."/>
            <person name="Bilham L."/>
            <person name="Robben J."/>
            <person name="van der Schueren J."/>
            <person name="Grymonprez B."/>
            <person name="Chuang Y.-J."/>
            <person name="Vandenbussche F."/>
            <person name="Braeken M."/>
            <person name="Weltjens I."/>
            <person name="Voet M."/>
            <person name="Bastiaens I."/>
            <person name="Aert R."/>
            <person name="Defoor E."/>
            <person name="Weitzenegger T."/>
            <person name="Bothe G."/>
            <person name="Ramsperger U."/>
            <person name="Hilbert H."/>
            <person name="Braun M."/>
            <person name="Holzer E."/>
            <person name="Brandt A."/>
            <person name="Peters S."/>
            <person name="van Staveren M."/>
            <person name="Dirkse W."/>
            <person name="Mooijman P."/>
            <person name="Klein Lankhorst R."/>
            <person name="Rose M."/>
            <person name="Hauf J."/>
            <person name="Koetter P."/>
            <person name="Berneiser S."/>
            <person name="Hempel S."/>
            <person name="Feldpausch M."/>
            <person name="Lamberth S."/>
            <person name="Van den Daele H."/>
            <person name="De Keyser A."/>
            <person name="Buysshaert C."/>
            <person name="Gielen J."/>
            <person name="Villarroel R."/>
            <person name="De Clercq R."/>
            <person name="van Montagu M."/>
            <person name="Rogers J."/>
            <person name="Cronin A."/>
            <person name="Quail M.A."/>
            <person name="Bray-Allen S."/>
            <person name="Clark L."/>
            <person name="Doggett J."/>
            <person name="Hall S."/>
            <person name="Kay M."/>
            <person name="Lennard N."/>
            <person name="McLay K."/>
            <person name="Mayes R."/>
            <person name="Pettett A."/>
            <person name="Rajandream M.A."/>
            <person name="Lyne M."/>
            <person name="Benes V."/>
            <person name="Rechmann S."/>
            <person name="Borkova D."/>
            <person name="Bloecker H."/>
            <person name="Scharfe M."/>
            <person name="Grimm M."/>
            <person name="Loehnert T.-H."/>
            <person name="Dose S."/>
            <person name="de Haan M."/>
            <person name="Maarse A.C."/>
            <person name="Schaefer M."/>
            <person name="Mueller-Auer S."/>
            <person name="Gabel C."/>
            <person name="Fuchs M."/>
            <person name="Fartmann B."/>
            <person name="Granderath K."/>
            <person name="Dauner D."/>
            <person name="Herzl A."/>
            <person name="Neumann S."/>
            <person name="Argiriou A."/>
            <person name="Vitale D."/>
            <person name="Liguori R."/>
            <person name="Piravandi E."/>
            <person name="Massenet O."/>
            <person name="Quigley F."/>
            <person name="Clabauld G."/>
            <person name="Muendlein A."/>
            <person name="Felber R."/>
            <person name="Schnabl S."/>
            <person name="Hiller R."/>
            <person name="Schmidt W."/>
            <person name="Lecharny A."/>
            <person name="Aubourg S."/>
            <person name="Chefdor F."/>
            <person name="Cooke R."/>
            <person name="Berger C."/>
            <person name="Monfort A."/>
            <person name="Casacuberta E."/>
            <person name="Gibbons T."/>
            <person name="Weber N."/>
            <person name="Vandenbol M."/>
            <person name="Bargues M."/>
            <person name="Terol J."/>
            <person name="Torres A."/>
            <person name="Perez-Perez A."/>
            <person name="Purnelle B."/>
            <person name="Bent E."/>
            <person name="Johnson S."/>
            <person name="Tacon D."/>
            <person name="Jesse T."/>
            <person name="Heijnen L."/>
            <person name="Schwarz S."/>
            <person name="Scholler P."/>
            <person name="Heber S."/>
            <person name="Francs P."/>
            <person name="Bielke C."/>
            <person name="Frishman D."/>
            <person name="Haase D."/>
            <person name="Lemcke K."/>
            <person name="Mewes H.-W."/>
            <person name="Stocker S."/>
            <person name="Zaccaria P."/>
            <person name="Bevan M."/>
            <person name="Wilson R.K."/>
            <person name="de la Bastide M."/>
            <person name="Habermann K."/>
            <person name="Parnell L."/>
            <person name="Dedhia N."/>
            <person name="Gnoj L."/>
            <person name="Schutz K."/>
            <person name="Huang E."/>
            <person name="Spiegel L."/>
            <person name="Sekhon M."/>
            <person name="Murray J."/>
            <person name="Sheet P."/>
            <person name="Cordes M."/>
            <person name="Abu-Threideh J."/>
            <person name="Stoneking T."/>
            <person name="Kalicki J."/>
            <person name="Graves T."/>
            <person name="Harmon G."/>
            <person name="Edwards J."/>
            <person name="Latreille P."/>
            <person name="Courtney L."/>
            <person name="Cloud J."/>
            <person name="Abbott A."/>
            <person name="Scott K."/>
            <person name="Johnson D."/>
            <person name="Minx P."/>
            <person name="Bentley D."/>
            <person name="Fulton B."/>
            <person name="Miller N."/>
            <person name="Greco T."/>
            <person name="Kemp K."/>
            <person name="Kramer J."/>
            <person name="Fulton L."/>
            <person name="Mardis E."/>
            <person name="Dante M."/>
            <person name="Pepin K."/>
            <person name="Hillier L.W."/>
            <person name="Nelson J."/>
            <person name="Spieth J."/>
            <person name="Ryan E."/>
            <person name="Andrews S."/>
            <person name="Geisel C."/>
            <person name="Layman D."/>
            <person name="Du H."/>
            <person name="Ali J."/>
            <person name="Berghoff A."/>
            <person name="Jones K."/>
            <person name="Drone K."/>
            <person name="Cotton M."/>
            <person name="Joshu C."/>
            <person name="Antonoiu B."/>
            <person name="Zidanic M."/>
            <person name="Strong C."/>
            <person name="Sun H."/>
            <person name="Lamar B."/>
            <person name="Yordan C."/>
            <person name="Ma P."/>
            <person name="Zhong J."/>
            <person name="Preston R."/>
            <person name="Vil D."/>
            <person name="Shekher M."/>
            <person name="Matero A."/>
            <person name="Shah R."/>
            <person name="Swaby I.K."/>
            <person name="O'Shaughnessy A."/>
            <person name="Rodriguez M."/>
            <person name="Hoffman J."/>
            <person name="Till S."/>
            <person name="Granat S."/>
            <person name="Shohdy N."/>
            <person name="Hasegawa A."/>
            <person name="Hameed A."/>
            <person name="Lodhi M."/>
            <person name="Johnson A."/>
            <person name="Chen E."/>
            <person name="Marra M.A."/>
            <person name="Martienssen R."/>
            <person name="McCombie W.R."/>
        </authorList>
    </citation>
    <scope>NUCLEOTIDE SEQUENCE [LARGE SCALE GENOMIC DNA]</scope>
    <source>
        <strain>cv. Columbia</strain>
    </source>
</reference>
<reference key="3">
    <citation type="journal article" date="2017" name="Plant J.">
        <title>Araport11: a complete reannotation of the Arabidopsis thaliana reference genome.</title>
        <authorList>
            <person name="Cheng C.Y."/>
            <person name="Krishnakumar V."/>
            <person name="Chan A.P."/>
            <person name="Thibaud-Nissen F."/>
            <person name="Schobel S."/>
            <person name="Town C.D."/>
        </authorList>
    </citation>
    <scope>GENOME REANNOTATION</scope>
    <source>
        <strain>cv. Columbia</strain>
    </source>
</reference>
<reference key="4">
    <citation type="journal article" date="2005" name="Plant Physiol.">
        <title>An expression and bioinformatics analysis of the Arabidopsis serine carboxypeptidase-like gene family.</title>
        <authorList>
            <person name="Fraser C.M."/>
            <person name="Rider L.W."/>
            <person name="Chapple C."/>
        </authorList>
    </citation>
    <scope>GENE FAMILY</scope>
    <scope>NOMENCLATURE</scope>
</reference>
<dbReference type="EC" id="3.4.16.-"/>
<dbReference type="EMBL" id="Z97337">
    <property type="protein sequence ID" value="CAB10289.1"/>
    <property type="status" value="ALT_SEQ"/>
    <property type="molecule type" value="Genomic_DNA"/>
</dbReference>
<dbReference type="EMBL" id="AL161540">
    <property type="protein sequence ID" value="CAB78552.1"/>
    <property type="status" value="ALT_SEQ"/>
    <property type="molecule type" value="Genomic_DNA"/>
</dbReference>
<dbReference type="EMBL" id="CP002687">
    <property type="protein sequence ID" value="AEE83556.1"/>
    <property type="molecule type" value="Genomic_DNA"/>
</dbReference>
<dbReference type="PIR" id="G71414">
    <property type="entry name" value="G71414"/>
</dbReference>
<dbReference type="RefSeq" id="NP_193246.2">
    <property type="nucleotide sequence ID" value="NM_117599.3"/>
</dbReference>
<dbReference type="SMR" id="O23364"/>
<dbReference type="STRING" id="3702.O23364"/>
<dbReference type="ESTHER" id="arath-AT4G15100">
    <property type="family name" value="Carboxypeptidase_S10"/>
</dbReference>
<dbReference type="MEROPS" id="S10.A27"/>
<dbReference type="GlyCosmos" id="O23364">
    <property type="glycosylation" value="4 sites, No reported glycans"/>
</dbReference>
<dbReference type="GlyGen" id="O23364">
    <property type="glycosylation" value="4 sites"/>
</dbReference>
<dbReference type="iPTMnet" id="O23364"/>
<dbReference type="PaxDb" id="3702-AT4G15100.1"/>
<dbReference type="ProteomicsDB" id="232748"/>
<dbReference type="EnsemblPlants" id="AT4G15100.1">
    <property type="protein sequence ID" value="AT4G15100.1"/>
    <property type="gene ID" value="AT4G15100"/>
</dbReference>
<dbReference type="GeneID" id="827176"/>
<dbReference type="Gramene" id="AT4G15100.1">
    <property type="protein sequence ID" value="AT4G15100.1"/>
    <property type="gene ID" value="AT4G15100"/>
</dbReference>
<dbReference type="KEGG" id="ath:AT4G15100"/>
<dbReference type="Araport" id="AT4G15100"/>
<dbReference type="TAIR" id="AT4G15100">
    <property type="gene designation" value="SCPL30"/>
</dbReference>
<dbReference type="eggNOG" id="KOG1282">
    <property type="taxonomic scope" value="Eukaryota"/>
</dbReference>
<dbReference type="HOGENOM" id="CLU_008523_13_0_1"/>
<dbReference type="InParanoid" id="O23364"/>
<dbReference type="OMA" id="TTSEYAQ"/>
<dbReference type="PhylomeDB" id="O23364"/>
<dbReference type="PRO" id="PR:O23364"/>
<dbReference type="Proteomes" id="UP000006548">
    <property type="component" value="Chromosome 4"/>
</dbReference>
<dbReference type="ExpressionAtlas" id="O23364">
    <property type="expression patterns" value="baseline and differential"/>
</dbReference>
<dbReference type="GO" id="GO:0005576">
    <property type="term" value="C:extracellular region"/>
    <property type="evidence" value="ECO:0007669"/>
    <property type="project" value="UniProtKB-SubCell"/>
</dbReference>
<dbReference type="GO" id="GO:0004185">
    <property type="term" value="F:serine-type carboxypeptidase activity"/>
    <property type="evidence" value="ECO:0007669"/>
    <property type="project" value="InterPro"/>
</dbReference>
<dbReference type="GO" id="GO:0006508">
    <property type="term" value="P:proteolysis"/>
    <property type="evidence" value="ECO:0007669"/>
    <property type="project" value="UniProtKB-KW"/>
</dbReference>
<dbReference type="FunFam" id="3.40.50.11320:FF:000001">
    <property type="entry name" value="Carboxypeptidase"/>
    <property type="match status" value="1"/>
</dbReference>
<dbReference type="FunFam" id="3.40.50.1820:FF:000030">
    <property type="entry name" value="Carboxypeptidase"/>
    <property type="match status" value="1"/>
</dbReference>
<dbReference type="Gene3D" id="3.40.50.11320">
    <property type="match status" value="1"/>
</dbReference>
<dbReference type="Gene3D" id="6.10.250.940">
    <property type="match status" value="1"/>
</dbReference>
<dbReference type="Gene3D" id="3.40.50.1820">
    <property type="entry name" value="alpha/beta hydrolase"/>
    <property type="match status" value="1"/>
</dbReference>
<dbReference type="InterPro" id="IPR029058">
    <property type="entry name" value="AB_hydrolase_fold"/>
</dbReference>
<dbReference type="InterPro" id="IPR001563">
    <property type="entry name" value="Peptidase_S10"/>
</dbReference>
<dbReference type="InterPro" id="IPR018202">
    <property type="entry name" value="Ser_caboxypep_ser_AS"/>
</dbReference>
<dbReference type="PANTHER" id="PTHR11802:SF497">
    <property type="entry name" value="SERINE CARBOXYPEPTIDASE-LIKE 31-RELATED"/>
    <property type="match status" value="1"/>
</dbReference>
<dbReference type="PANTHER" id="PTHR11802">
    <property type="entry name" value="SERINE PROTEASE FAMILY S10 SERINE CARBOXYPEPTIDASE"/>
    <property type="match status" value="1"/>
</dbReference>
<dbReference type="Pfam" id="PF00450">
    <property type="entry name" value="Peptidase_S10"/>
    <property type="match status" value="1"/>
</dbReference>
<dbReference type="PRINTS" id="PR00724">
    <property type="entry name" value="CRBOXYPTASEC"/>
</dbReference>
<dbReference type="SUPFAM" id="SSF53474">
    <property type="entry name" value="alpha/beta-Hydrolases"/>
    <property type="match status" value="1"/>
</dbReference>
<dbReference type="PROSITE" id="PS00131">
    <property type="entry name" value="CARBOXYPEPT_SER_SER"/>
    <property type="match status" value="1"/>
</dbReference>
<organism>
    <name type="scientific">Arabidopsis thaliana</name>
    <name type="common">Mouse-ear cress</name>
    <dbReference type="NCBI Taxonomy" id="3702"/>
    <lineage>
        <taxon>Eukaryota</taxon>
        <taxon>Viridiplantae</taxon>
        <taxon>Streptophyta</taxon>
        <taxon>Embryophyta</taxon>
        <taxon>Tracheophyta</taxon>
        <taxon>Spermatophyta</taxon>
        <taxon>Magnoliopsida</taxon>
        <taxon>eudicotyledons</taxon>
        <taxon>Gunneridae</taxon>
        <taxon>Pentapetalae</taxon>
        <taxon>rosids</taxon>
        <taxon>malvids</taxon>
        <taxon>Brassicales</taxon>
        <taxon>Brassicaceae</taxon>
        <taxon>Camelineae</taxon>
        <taxon>Arabidopsis</taxon>
    </lineage>
</organism>
<proteinExistence type="evidence at transcript level"/>
<name>SCP30_ARATH</name>
<accession>O23364</accession>
<sequence length="488" mass="55259">MDNHTKSFSSLLISLWFTALLILVEMVSCARQHRRSFLAKEADLVTNLPGQPDVSFKHYAGYVPVDKSNGRALFYWFFEAMDLPKEKPLVLWLNGGPGCSSVGYGATQEIGPFLADTNEKGLIFNPYAWNKEVNMLFLESPVGVGFSYSNTSSDYLNLDDHFAKKDAYTFLCNWFEKFPEHKGNEFYIAGESYAGIYVPELAELVYDNNEKNNDLSLHINLKGFLLGNPDISNPDDWRGWVDYAWSHAVISDETHRNINRLCNFSSDDVWNNDKCNEAIAEVDKQYNEIDIYSLYTSACKGDSAKSSYFASAQFKTNYHISSKRMPPRRLAGYDPCLDDYVKVYYNRADVQKALHASDGVNLKNWSICNMEIFHNWTYVVQSVLPIYQKLIAGGLRIWVYSGDTDGCIPVLGTRYSLNALGLPIKTAWRPWYHEKQVSGWVQEYDGLTFATFRGAGHTVPSFKPSSSLAFISAFVKGVPLSSSRVETN</sequence>